<proteinExistence type="evidence at transcript level"/>
<sequence length="453" mass="53954">MPPRTAAERGGRRKSVKAPPPVDPLVELTTLESVHDALAKAERLRNYFQVERDKVNDFWTITKGEVETYRNRLFNAEASIEELERSHQVEMKVYKQRVRHLIYERKKKAQACQDESDRLLREAEDRHLQRMNEIQAKLQQQDQQLRAAAADHEMNVYEKRDSHSYMVTVTKTQSHEKELARLQVSCEAKLKVLRDELELRRRAEIHEIEERKNEHINALIKQHEEKFHEMKTYYNQITTNNLEIIHSLKEEIAQMKQNDEHNETLMYDIDRENQNLVAPLEEAQREVAELQQKRKQNEQNKRGLEVTRVKLRSLREEIRRQREEHQALEERYACVHREREELKGKFESALRQAVMVVEERNEVLQQKLIESHALVEERDVQLEGVLRAMNLEPKTLELIATEVDEWLQRKNQLIKDLHFELKKGEKLYSATLLEMERRCQTANIASLPRSNFE</sequence>
<reference key="1">
    <citation type="journal article" date="1997" name="J. Exp. Med.">
        <title>The gene for a T lymphocyte triggering factor from African trypanosomes.</title>
        <authorList>
            <person name="Vaidya T."/>
            <person name="Bakhiet M."/>
            <person name="Hill K.L."/>
            <person name="Olsson T."/>
            <person name="Kristensson K."/>
            <person name="Donelson J.E."/>
        </authorList>
    </citation>
    <scope>NUCLEOTIDE SEQUENCE [MRNA]</scope>
</reference>
<reference key="2">
    <citation type="journal article" date="2000" name="J. Biol. Chem.">
        <title>T lymphocyte-triggering factor of African trypanosomes is associated with the flagellar fraction of the cytoskeleton and represents a new family of proteins that are present in several divergent eukaryotes.</title>
        <authorList>
            <person name="Hill K.L."/>
            <person name="Hutchings N.R."/>
            <person name="Grandgenett P.M."/>
            <person name="Donelson J.E."/>
        </authorList>
    </citation>
    <scope>SUBCELLULAR LOCATION</scope>
</reference>
<reference key="3">
    <citation type="journal article" date="2002" name="J. Cell Biol.">
        <title>Trypanin is a cytoskeletal linker protein and is required for cell motility in African trypanosomes.</title>
        <authorList>
            <person name="Hutchings N.R."/>
            <person name="Donelson J.E."/>
            <person name="Hill K.L."/>
        </authorList>
    </citation>
    <scope>FUNCTION</scope>
    <scope>SUBCELLULAR LOCATION</scope>
</reference>
<reference key="4">
    <citation type="journal article" date="2006" name="Eukaryot. Cell">
        <title>Flagellar motility contributes to cytokinesis in Trypanosoma brucei and is modulated by an evolutionarily conserved dynein regulatory system.</title>
        <authorList>
            <person name="Ralston K.S."/>
            <person name="Lerner A.G."/>
            <person name="Diener D.R."/>
            <person name="Hill K.L."/>
        </authorList>
    </citation>
    <scope>FUNCTION</scope>
</reference>
<reference key="5">
    <citation type="journal article" date="2006" name="PLoS Pathog.">
        <title>Trypanin, a component of the flagellar dynein regulatory complex, is essential in bloodstream form African trypanosomes.</title>
        <authorList>
            <person name="Ralston K.S."/>
            <person name="Hill K.L."/>
        </authorList>
    </citation>
    <scope>FUNCTION</scope>
    <scope>SUBCELLULAR LOCATION</scope>
</reference>
<organism>
    <name type="scientific">Trypanosoma brucei rhodesiense</name>
    <dbReference type="NCBI Taxonomy" id="31286"/>
    <lineage>
        <taxon>Eukaryota</taxon>
        <taxon>Discoba</taxon>
        <taxon>Euglenozoa</taxon>
        <taxon>Kinetoplastea</taxon>
        <taxon>Metakinetoplastina</taxon>
        <taxon>Trypanosomatida</taxon>
        <taxon>Trypanosomatidae</taxon>
        <taxon>Trypanosoma</taxon>
    </lineage>
</organism>
<protein>
    <recommendedName>
        <fullName>Trypanin</fullName>
    </recommendedName>
    <alternativeName>
        <fullName>T lymphocyte-triggering factor</fullName>
        <shortName>TLTF</shortName>
    </alternativeName>
</protein>
<accession>O15697</accession>
<keyword id="KW-0966">Cell projection</keyword>
<keyword id="KW-0969">Cilium</keyword>
<keyword id="KW-0175">Coiled coil</keyword>
<keyword id="KW-0963">Cytoplasm</keyword>
<keyword id="KW-0206">Cytoskeleton</keyword>
<keyword id="KW-0282">Flagellum</keyword>
<keyword id="KW-0493">Microtubule</keyword>
<evidence type="ECO:0000255" key="1"/>
<evidence type="ECO:0000256" key="2">
    <source>
        <dbReference type="SAM" id="MobiDB-lite"/>
    </source>
</evidence>
<evidence type="ECO:0000269" key="3">
    <source>
    </source>
</evidence>
<evidence type="ECO:0000269" key="4">
    <source>
    </source>
</evidence>
<evidence type="ECO:0000269" key="5">
    <source>
    </source>
</evidence>
<evidence type="ECO:0000305" key="6"/>
<dbReference type="EMBL" id="AF012853">
    <property type="protein sequence ID" value="AAB81499.1"/>
    <property type="molecule type" value="mRNA"/>
</dbReference>
<dbReference type="SMR" id="O15697"/>
<dbReference type="GO" id="GO:0005929">
    <property type="term" value="C:cilium"/>
    <property type="evidence" value="ECO:0000314"/>
    <property type="project" value="GeneDB"/>
</dbReference>
<dbReference type="GO" id="GO:0005856">
    <property type="term" value="C:cytoskeleton"/>
    <property type="evidence" value="ECO:0000315"/>
    <property type="project" value="CACAO"/>
</dbReference>
<dbReference type="GO" id="GO:0005794">
    <property type="term" value="C:Golgi apparatus"/>
    <property type="evidence" value="ECO:0007669"/>
    <property type="project" value="TreeGrafter"/>
</dbReference>
<dbReference type="GO" id="GO:0005874">
    <property type="term" value="C:microtubule"/>
    <property type="evidence" value="ECO:0007669"/>
    <property type="project" value="UniProtKB-KW"/>
</dbReference>
<dbReference type="GO" id="GO:0031514">
    <property type="term" value="C:motile cilium"/>
    <property type="evidence" value="ECO:0007669"/>
    <property type="project" value="UniProtKB-SubCell"/>
</dbReference>
<dbReference type="GO" id="GO:0008017">
    <property type="term" value="F:microtubule binding"/>
    <property type="evidence" value="ECO:0007669"/>
    <property type="project" value="InterPro"/>
</dbReference>
<dbReference type="GO" id="GO:0031267">
    <property type="term" value="F:small GTPase binding"/>
    <property type="evidence" value="ECO:0007669"/>
    <property type="project" value="InterPro"/>
</dbReference>
<dbReference type="GO" id="GO:0060285">
    <property type="term" value="P:cilium-dependent cell motility"/>
    <property type="evidence" value="ECO:0000315"/>
    <property type="project" value="GeneDB"/>
</dbReference>
<dbReference type="InterPro" id="IPR039308">
    <property type="entry name" value="GAS8"/>
</dbReference>
<dbReference type="InterPro" id="IPR025593">
    <property type="entry name" value="GAS8_dom"/>
</dbReference>
<dbReference type="PANTHER" id="PTHR31543">
    <property type="entry name" value="DYNEIN REGULATORY COMPLEX SUBUNIT 4"/>
    <property type="match status" value="1"/>
</dbReference>
<dbReference type="PANTHER" id="PTHR31543:SF0">
    <property type="entry name" value="DYNEIN REGULATORY COMPLEX SUBUNIT 4"/>
    <property type="match status" value="1"/>
</dbReference>
<dbReference type="Pfam" id="PF13851">
    <property type="entry name" value="GAS"/>
    <property type="match status" value="1"/>
</dbReference>
<name>DRC4_TRYBR</name>
<comment type="function">
    <text evidence="3 4 5">Cytoskeletal linker that plays a central role in the flagellum cell motility. Required for directional cell motility. Plays a role as part of a dynein regulatory system that regulates flagellar beat in response to signals from the central pair apparatus and radial spokes in procyclic cells. Also plays an essential role in the bloodstream form of the trypanosomes as its silencing is lethal for the circulating form.</text>
</comment>
<comment type="subcellular location">
    <subcellularLocation>
        <location>Cytoplasm</location>
    </subcellularLocation>
    <subcellularLocation>
        <location>Cytoplasm</location>
        <location>Cytoskeleton</location>
    </subcellularLocation>
    <subcellularLocation>
        <location>Cell projection</location>
        <location>Cilium</location>
        <location>Flagellum</location>
    </subcellularLocation>
    <text>Associated with the cytoskeleton. Localized to the site of attachment of the flagellum to the subpellicular cytoskeleton. Also localized in the flagellum of the bloodstream form trypanosomes.</text>
</comment>
<comment type="miscellaneous">
    <text>Procyclic parasite mutants lacking trypanin exhibit a motility defect indicative of abnormal dynein regulation, but have an actively beating flagellum and are able to spin and tumble in place. However, bloodstream form mutants lacking trypanin exhibit a severe growth defect and are not viable. They revealed a failure of cytokinesis.</text>
</comment>
<comment type="similarity">
    <text evidence="6">Belongs to the DRC4 family.</text>
</comment>
<feature type="chain" id="PRO_0000220379" description="Trypanin">
    <location>
        <begin position="1"/>
        <end position="453"/>
    </location>
</feature>
<feature type="region of interest" description="Disordered" evidence="2">
    <location>
        <begin position="1"/>
        <end position="22"/>
    </location>
</feature>
<feature type="coiled-coil region" evidence="1">
    <location>
        <begin position="60"/>
        <end position="156"/>
    </location>
</feature>
<feature type="coiled-coil region" evidence="1">
    <location>
        <begin position="185"/>
        <end position="377"/>
    </location>
</feature>
<feature type="compositionally biased region" description="Basic and acidic residues" evidence="2">
    <location>
        <begin position="1"/>
        <end position="10"/>
    </location>
</feature>